<organism>
    <name type="scientific">Pyrobaculum aerophilum (strain ATCC 51768 / DSM 7523 / JCM 9630 / CIP 104966 / NBRC 100827 / IM2)</name>
    <dbReference type="NCBI Taxonomy" id="178306"/>
    <lineage>
        <taxon>Archaea</taxon>
        <taxon>Thermoproteota</taxon>
        <taxon>Thermoprotei</taxon>
        <taxon>Thermoproteales</taxon>
        <taxon>Thermoproteaceae</taxon>
        <taxon>Pyrobaculum</taxon>
    </lineage>
</organism>
<sequence>MKRPPVPLLQNGVRADGRTPDQMREVKIAVGVVSNADGSAMVSYGATTAVAAVYGPREMHPRHLSLPDRGVMRVRYHMAPFSTKDERKSPTPSRREIEISKILREALEPAIVLEQYPRSRIDVFVEILQADGSTRVASLTAASLALADAGIYMRDLVVGVSVGLVDGTVVLDLNGLEDQYGEGDLPLGYMPNLKRFTLLQLDGAWTRDMFLQALNLAVRGAEYVYQIARDALKNKYMSIAEEIYGR</sequence>
<accession>Q8ZVM9</accession>
<keyword id="KW-0963">Cytoplasm</keyword>
<keyword id="KW-0269">Exonuclease</keyword>
<keyword id="KW-0271">Exosome</keyword>
<keyword id="KW-0378">Hydrolase</keyword>
<keyword id="KW-0540">Nuclease</keyword>
<keyword id="KW-1185">Reference proteome</keyword>
<gene>
    <name evidence="1" type="primary">rrp41</name>
    <name type="ordered locus">PAE2207</name>
</gene>
<proteinExistence type="inferred from homology"/>
<name>RRP41_PYRAE</name>
<protein>
    <recommendedName>
        <fullName evidence="1">Exosome complex component Rrp41</fullName>
        <ecNumber evidence="1">3.1.13.-</ecNumber>
    </recommendedName>
</protein>
<feature type="chain" id="PRO_0000139986" description="Exosome complex component Rrp41">
    <location>
        <begin position="1"/>
        <end position="246"/>
    </location>
</feature>
<dbReference type="EC" id="3.1.13.-" evidence="1"/>
<dbReference type="EMBL" id="AE009441">
    <property type="protein sequence ID" value="AAL64027.1"/>
    <property type="molecule type" value="Genomic_DNA"/>
</dbReference>
<dbReference type="RefSeq" id="WP_011008495.1">
    <property type="nucleotide sequence ID" value="NC_003364.1"/>
</dbReference>
<dbReference type="SMR" id="Q8ZVM9"/>
<dbReference type="FunCoup" id="Q8ZVM9">
    <property type="interactions" value="169"/>
</dbReference>
<dbReference type="STRING" id="178306.PAE2207"/>
<dbReference type="EnsemblBacteria" id="AAL64027">
    <property type="protein sequence ID" value="AAL64027"/>
    <property type="gene ID" value="PAE2207"/>
</dbReference>
<dbReference type="GeneID" id="1464361"/>
<dbReference type="KEGG" id="pai:PAE2207"/>
<dbReference type="PATRIC" id="fig|178306.9.peg.1639"/>
<dbReference type="eggNOG" id="arCOG01575">
    <property type="taxonomic scope" value="Archaea"/>
</dbReference>
<dbReference type="HOGENOM" id="CLU_063514_0_0_2"/>
<dbReference type="InParanoid" id="Q8ZVM9"/>
<dbReference type="Proteomes" id="UP000002439">
    <property type="component" value="Chromosome"/>
</dbReference>
<dbReference type="GO" id="GO:0000177">
    <property type="term" value="C:cytoplasmic exosome (RNase complex)"/>
    <property type="evidence" value="ECO:0000318"/>
    <property type="project" value="GO_Central"/>
</dbReference>
<dbReference type="GO" id="GO:0000175">
    <property type="term" value="F:3'-5'-RNA exonuclease activity"/>
    <property type="evidence" value="ECO:0007669"/>
    <property type="project" value="UniProtKB-UniRule"/>
</dbReference>
<dbReference type="GO" id="GO:0003723">
    <property type="term" value="F:RNA binding"/>
    <property type="evidence" value="ECO:0000318"/>
    <property type="project" value="GO_Central"/>
</dbReference>
<dbReference type="GO" id="GO:0010467">
    <property type="term" value="P:gene expression"/>
    <property type="evidence" value="ECO:0007669"/>
    <property type="project" value="UniProtKB-ARBA"/>
</dbReference>
<dbReference type="GO" id="GO:0016075">
    <property type="term" value="P:rRNA catabolic process"/>
    <property type="evidence" value="ECO:0000318"/>
    <property type="project" value="GO_Central"/>
</dbReference>
<dbReference type="CDD" id="cd11366">
    <property type="entry name" value="RNase_PH_archRRP41"/>
    <property type="match status" value="1"/>
</dbReference>
<dbReference type="FunFam" id="3.30.230.70:FF:000004">
    <property type="entry name" value="Exosome complex component Rrp41"/>
    <property type="match status" value="1"/>
</dbReference>
<dbReference type="Gene3D" id="3.30.230.70">
    <property type="entry name" value="GHMP Kinase, N-terminal domain"/>
    <property type="match status" value="1"/>
</dbReference>
<dbReference type="HAMAP" id="MF_00591">
    <property type="entry name" value="Exosome_Rrp41"/>
    <property type="match status" value="1"/>
</dbReference>
<dbReference type="InterPro" id="IPR001247">
    <property type="entry name" value="ExoRNase_PH_dom1"/>
</dbReference>
<dbReference type="InterPro" id="IPR015847">
    <property type="entry name" value="ExoRNase_PH_dom2"/>
</dbReference>
<dbReference type="InterPro" id="IPR036345">
    <property type="entry name" value="ExoRNase_PH_dom2_sf"/>
</dbReference>
<dbReference type="InterPro" id="IPR027408">
    <property type="entry name" value="PNPase/RNase_PH_dom_sf"/>
</dbReference>
<dbReference type="InterPro" id="IPR020568">
    <property type="entry name" value="Ribosomal_Su5_D2-typ_SF"/>
</dbReference>
<dbReference type="InterPro" id="IPR050080">
    <property type="entry name" value="RNase_PH"/>
</dbReference>
<dbReference type="InterPro" id="IPR011807">
    <property type="entry name" value="Rrp41"/>
</dbReference>
<dbReference type="NCBIfam" id="TIGR02065">
    <property type="entry name" value="ECX1"/>
    <property type="match status" value="1"/>
</dbReference>
<dbReference type="PANTHER" id="PTHR11953">
    <property type="entry name" value="EXOSOME COMPLEX COMPONENT"/>
    <property type="match status" value="1"/>
</dbReference>
<dbReference type="PANTHER" id="PTHR11953:SF0">
    <property type="entry name" value="EXOSOME COMPLEX COMPONENT RRP41"/>
    <property type="match status" value="1"/>
</dbReference>
<dbReference type="Pfam" id="PF01138">
    <property type="entry name" value="RNase_PH"/>
    <property type="match status" value="1"/>
</dbReference>
<dbReference type="Pfam" id="PF03725">
    <property type="entry name" value="RNase_PH_C"/>
    <property type="match status" value="1"/>
</dbReference>
<dbReference type="SUPFAM" id="SSF55666">
    <property type="entry name" value="Ribonuclease PH domain 2-like"/>
    <property type="match status" value="1"/>
</dbReference>
<dbReference type="SUPFAM" id="SSF54211">
    <property type="entry name" value="Ribosomal protein S5 domain 2-like"/>
    <property type="match status" value="1"/>
</dbReference>
<reference key="1">
    <citation type="journal article" date="2002" name="Proc. Natl. Acad. Sci. U.S.A.">
        <title>Genome sequence of the hyperthermophilic crenarchaeon Pyrobaculum aerophilum.</title>
        <authorList>
            <person name="Fitz-Gibbon S.T."/>
            <person name="Ladner H."/>
            <person name="Kim U.-J."/>
            <person name="Stetter K.O."/>
            <person name="Simon M.I."/>
            <person name="Miller J.H."/>
        </authorList>
    </citation>
    <scope>NUCLEOTIDE SEQUENCE [LARGE SCALE GENOMIC DNA]</scope>
    <source>
        <strain>ATCC 51768 / DSM 7523 / JCM 9630 / CIP 104966 / NBRC 100827 / IM2</strain>
    </source>
</reference>
<evidence type="ECO:0000255" key="1">
    <source>
        <dbReference type="HAMAP-Rule" id="MF_00591"/>
    </source>
</evidence>
<comment type="function">
    <text evidence="1">Catalytic component of the exosome, which is a complex involved in RNA degradation. Has 3'-&gt;5' exoribonuclease activity. Can also synthesize heteromeric RNA-tails.</text>
</comment>
<comment type="subunit">
    <text evidence="1">Component of the archaeal exosome complex. Forms a hexameric ring-like arrangement composed of 3 Rrp41-Rrp42 heterodimers. The hexameric ring associates with a trimer of Rrp4 and/or Csl4 subunits.</text>
</comment>
<comment type="subcellular location">
    <subcellularLocation>
        <location evidence="1">Cytoplasm</location>
    </subcellularLocation>
</comment>
<comment type="similarity">
    <text evidence="1">Belongs to the RNase PH family. Rrp41 subfamily.</text>
</comment>